<reference key="1">
    <citation type="journal article" date="2005" name="Genome Res.">
        <title>Comparative and functional genomic analyses of the pathogenicity of phytopathogen Xanthomonas campestris pv. campestris.</title>
        <authorList>
            <person name="Qian W."/>
            <person name="Jia Y."/>
            <person name="Ren S.-X."/>
            <person name="He Y.-Q."/>
            <person name="Feng J.-X."/>
            <person name="Lu L.-F."/>
            <person name="Sun Q."/>
            <person name="Ying G."/>
            <person name="Tang D.-J."/>
            <person name="Tang H."/>
            <person name="Wu W."/>
            <person name="Hao P."/>
            <person name="Wang L."/>
            <person name="Jiang B.-L."/>
            <person name="Zeng S."/>
            <person name="Gu W.-Y."/>
            <person name="Lu G."/>
            <person name="Rong L."/>
            <person name="Tian Y."/>
            <person name="Yao Z."/>
            <person name="Fu G."/>
            <person name="Chen B."/>
            <person name="Fang R."/>
            <person name="Qiang B."/>
            <person name="Chen Z."/>
            <person name="Zhao G.-P."/>
            <person name="Tang J.-L."/>
            <person name="He C."/>
        </authorList>
    </citation>
    <scope>NUCLEOTIDE SEQUENCE [LARGE SCALE GENOMIC DNA]</scope>
    <source>
        <strain>8004</strain>
    </source>
</reference>
<protein>
    <recommendedName>
        <fullName evidence="1">Glycerol kinase</fullName>
        <ecNumber evidence="1">2.7.1.30</ecNumber>
    </recommendedName>
    <alternativeName>
        <fullName evidence="1">ATP:glycerol 3-phosphotransferase</fullName>
    </alternativeName>
    <alternativeName>
        <fullName evidence="1">Glycerokinase</fullName>
        <shortName evidence="1">GK</shortName>
    </alternativeName>
</protein>
<gene>
    <name evidence="1" type="primary">glpK</name>
    <name type="ordered locus">XC_0370</name>
</gene>
<organism>
    <name type="scientific">Xanthomonas campestris pv. campestris (strain 8004)</name>
    <dbReference type="NCBI Taxonomy" id="314565"/>
    <lineage>
        <taxon>Bacteria</taxon>
        <taxon>Pseudomonadati</taxon>
        <taxon>Pseudomonadota</taxon>
        <taxon>Gammaproteobacteria</taxon>
        <taxon>Lysobacterales</taxon>
        <taxon>Lysobacteraceae</taxon>
        <taxon>Xanthomonas</taxon>
    </lineage>
</organism>
<name>GLPK_XANC8</name>
<evidence type="ECO:0000255" key="1">
    <source>
        <dbReference type="HAMAP-Rule" id="MF_00186"/>
    </source>
</evidence>
<feature type="chain" id="PRO_1000020812" description="Glycerol kinase">
    <location>
        <begin position="1"/>
        <end position="499"/>
    </location>
</feature>
<feature type="binding site" evidence="1">
    <location>
        <position position="13"/>
    </location>
    <ligand>
        <name>ADP</name>
        <dbReference type="ChEBI" id="CHEBI:456216"/>
    </ligand>
</feature>
<feature type="binding site" evidence="1">
    <location>
        <position position="13"/>
    </location>
    <ligand>
        <name>ATP</name>
        <dbReference type="ChEBI" id="CHEBI:30616"/>
    </ligand>
</feature>
<feature type="binding site" evidence="1">
    <location>
        <position position="13"/>
    </location>
    <ligand>
        <name>sn-glycerol 3-phosphate</name>
        <dbReference type="ChEBI" id="CHEBI:57597"/>
    </ligand>
</feature>
<feature type="binding site" evidence="1">
    <location>
        <position position="14"/>
    </location>
    <ligand>
        <name>ATP</name>
        <dbReference type="ChEBI" id="CHEBI:30616"/>
    </ligand>
</feature>
<feature type="binding site" evidence="1">
    <location>
        <position position="15"/>
    </location>
    <ligand>
        <name>ATP</name>
        <dbReference type="ChEBI" id="CHEBI:30616"/>
    </ligand>
</feature>
<feature type="binding site" evidence="1">
    <location>
        <position position="17"/>
    </location>
    <ligand>
        <name>ADP</name>
        <dbReference type="ChEBI" id="CHEBI:456216"/>
    </ligand>
</feature>
<feature type="binding site" evidence="1">
    <location>
        <position position="83"/>
    </location>
    <ligand>
        <name>glycerol</name>
        <dbReference type="ChEBI" id="CHEBI:17754"/>
    </ligand>
</feature>
<feature type="binding site" evidence="1">
    <location>
        <position position="83"/>
    </location>
    <ligand>
        <name>sn-glycerol 3-phosphate</name>
        <dbReference type="ChEBI" id="CHEBI:57597"/>
    </ligand>
</feature>
<feature type="binding site" evidence="1">
    <location>
        <position position="84"/>
    </location>
    <ligand>
        <name>glycerol</name>
        <dbReference type="ChEBI" id="CHEBI:17754"/>
    </ligand>
</feature>
<feature type="binding site" evidence="1">
    <location>
        <position position="84"/>
    </location>
    <ligand>
        <name>sn-glycerol 3-phosphate</name>
        <dbReference type="ChEBI" id="CHEBI:57597"/>
    </ligand>
</feature>
<feature type="binding site" evidence="1">
    <location>
        <position position="135"/>
    </location>
    <ligand>
        <name>glycerol</name>
        <dbReference type="ChEBI" id="CHEBI:17754"/>
    </ligand>
</feature>
<feature type="binding site" evidence="1">
    <location>
        <position position="135"/>
    </location>
    <ligand>
        <name>sn-glycerol 3-phosphate</name>
        <dbReference type="ChEBI" id="CHEBI:57597"/>
    </ligand>
</feature>
<feature type="binding site" evidence="1">
    <location>
        <position position="245"/>
    </location>
    <ligand>
        <name>glycerol</name>
        <dbReference type="ChEBI" id="CHEBI:17754"/>
    </ligand>
</feature>
<feature type="binding site" evidence="1">
    <location>
        <position position="245"/>
    </location>
    <ligand>
        <name>sn-glycerol 3-phosphate</name>
        <dbReference type="ChEBI" id="CHEBI:57597"/>
    </ligand>
</feature>
<feature type="binding site" evidence="1">
    <location>
        <position position="246"/>
    </location>
    <ligand>
        <name>glycerol</name>
        <dbReference type="ChEBI" id="CHEBI:17754"/>
    </ligand>
</feature>
<feature type="binding site" evidence="1">
    <location>
        <position position="267"/>
    </location>
    <ligand>
        <name>ADP</name>
        <dbReference type="ChEBI" id="CHEBI:456216"/>
    </ligand>
</feature>
<feature type="binding site" evidence="1">
    <location>
        <position position="267"/>
    </location>
    <ligand>
        <name>ATP</name>
        <dbReference type="ChEBI" id="CHEBI:30616"/>
    </ligand>
</feature>
<feature type="binding site" evidence="1">
    <location>
        <position position="310"/>
    </location>
    <ligand>
        <name>ADP</name>
        <dbReference type="ChEBI" id="CHEBI:456216"/>
    </ligand>
</feature>
<feature type="binding site" evidence="1">
    <location>
        <position position="310"/>
    </location>
    <ligand>
        <name>ATP</name>
        <dbReference type="ChEBI" id="CHEBI:30616"/>
    </ligand>
</feature>
<feature type="binding site" evidence="1">
    <location>
        <position position="314"/>
    </location>
    <ligand>
        <name>ATP</name>
        <dbReference type="ChEBI" id="CHEBI:30616"/>
    </ligand>
</feature>
<feature type="binding site" evidence="1">
    <location>
        <position position="411"/>
    </location>
    <ligand>
        <name>ADP</name>
        <dbReference type="ChEBI" id="CHEBI:456216"/>
    </ligand>
</feature>
<feature type="binding site" evidence="1">
    <location>
        <position position="411"/>
    </location>
    <ligand>
        <name>ATP</name>
        <dbReference type="ChEBI" id="CHEBI:30616"/>
    </ligand>
</feature>
<feature type="binding site" evidence="1">
    <location>
        <position position="415"/>
    </location>
    <ligand>
        <name>ADP</name>
        <dbReference type="ChEBI" id="CHEBI:456216"/>
    </ligand>
</feature>
<proteinExistence type="inferred from homology"/>
<comment type="function">
    <text evidence="1">Key enzyme in the regulation of glycerol uptake and metabolism. Catalyzes the phosphorylation of glycerol to yield sn-glycerol 3-phosphate.</text>
</comment>
<comment type="catalytic activity">
    <reaction evidence="1">
        <text>glycerol + ATP = sn-glycerol 3-phosphate + ADP + H(+)</text>
        <dbReference type="Rhea" id="RHEA:21644"/>
        <dbReference type="ChEBI" id="CHEBI:15378"/>
        <dbReference type="ChEBI" id="CHEBI:17754"/>
        <dbReference type="ChEBI" id="CHEBI:30616"/>
        <dbReference type="ChEBI" id="CHEBI:57597"/>
        <dbReference type="ChEBI" id="CHEBI:456216"/>
        <dbReference type="EC" id="2.7.1.30"/>
    </reaction>
</comment>
<comment type="activity regulation">
    <text evidence="1">Inhibited by fructose 1,6-bisphosphate (FBP).</text>
</comment>
<comment type="pathway">
    <text evidence="1">Polyol metabolism; glycerol degradation via glycerol kinase pathway; sn-glycerol 3-phosphate from glycerol: step 1/1.</text>
</comment>
<comment type="similarity">
    <text evidence="1">Belongs to the FGGY kinase family.</text>
</comment>
<dbReference type="EC" id="2.7.1.30" evidence="1"/>
<dbReference type="EMBL" id="CP000050">
    <property type="protein sequence ID" value="AAY47455.1"/>
    <property type="molecule type" value="Genomic_DNA"/>
</dbReference>
<dbReference type="RefSeq" id="WP_011269474.1">
    <property type="nucleotide sequence ID" value="NC_007086.1"/>
</dbReference>
<dbReference type="SMR" id="Q4UZR8"/>
<dbReference type="KEGG" id="xcb:XC_0370"/>
<dbReference type="HOGENOM" id="CLU_009281_2_3_6"/>
<dbReference type="UniPathway" id="UPA00618">
    <property type="reaction ID" value="UER00672"/>
</dbReference>
<dbReference type="Proteomes" id="UP000000420">
    <property type="component" value="Chromosome"/>
</dbReference>
<dbReference type="GO" id="GO:0005829">
    <property type="term" value="C:cytosol"/>
    <property type="evidence" value="ECO:0007669"/>
    <property type="project" value="TreeGrafter"/>
</dbReference>
<dbReference type="GO" id="GO:0005524">
    <property type="term" value="F:ATP binding"/>
    <property type="evidence" value="ECO:0007669"/>
    <property type="project" value="UniProtKB-UniRule"/>
</dbReference>
<dbReference type="GO" id="GO:0004370">
    <property type="term" value="F:glycerol kinase activity"/>
    <property type="evidence" value="ECO:0000250"/>
    <property type="project" value="UniProtKB"/>
</dbReference>
<dbReference type="GO" id="GO:0019563">
    <property type="term" value="P:glycerol catabolic process"/>
    <property type="evidence" value="ECO:0007669"/>
    <property type="project" value="UniProtKB-UniRule"/>
</dbReference>
<dbReference type="GO" id="GO:0006071">
    <property type="term" value="P:glycerol metabolic process"/>
    <property type="evidence" value="ECO:0000250"/>
    <property type="project" value="UniProtKB"/>
</dbReference>
<dbReference type="GO" id="GO:0006072">
    <property type="term" value="P:glycerol-3-phosphate metabolic process"/>
    <property type="evidence" value="ECO:0007669"/>
    <property type="project" value="InterPro"/>
</dbReference>
<dbReference type="CDD" id="cd07786">
    <property type="entry name" value="FGGY_EcGK_like"/>
    <property type="match status" value="1"/>
</dbReference>
<dbReference type="FunFam" id="3.30.420.40:FF:000007">
    <property type="entry name" value="Glycerol kinase"/>
    <property type="match status" value="1"/>
</dbReference>
<dbReference type="FunFam" id="3.30.420.40:FF:000008">
    <property type="entry name" value="Glycerol kinase"/>
    <property type="match status" value="1"/>
</dbReference>
<dbReference type="Gene3D" id="3.30.420.40">
    <property type="match status" value="2"/>
</dbReference>
<dbReference type="HAMAP" id="MF_00186">
    <property type="entry name" value="Glycerol_kin"/>
    <property type="match status" value="1"/>
</dbReference>
<dbReference type="InterPro" id="IPR043129">
    <property type="entry name" value="ATPase_NBD"/>
</dbReference>
<dbReference type="InterPro" id="IPR000577">
    <property type="entry name" value="Carb_kinase_FGGY"/>
</dbReference>
<dbReference type="InterPro" id="IPR018483">
    <property type="entry name" value="Carb_kinase_FGGY_CS"/>
</dbReference>
<dbReference type="InterPro" id="IPR018485">
    <property type="entry name" value="FGGY_C"/>
</dbReference>
<dbReference type="InterPro" id="IPR018484">
    <property type="entry name" value="FGGY_N"/>
</dbReference>
<dbReference type="InterPro" id="IPR005999">
    <property type="entry name" value="Glycerol_kin"/>
</dbReference>
<dbReference type="NCBIfam" id="TIGR01311">
    <property type="entry name" value="glycerol_kin"/>
    <property type="match status" value="1"/>
</dbReference>
<dbReference type="NCBIfam" id="NF000756">
    <property type="entry name" value="PRK00047.1"/>
    <property type="match status" value="1"/>
</dbReference>
<dbReference type="PANTHER" id="PTHR10196:SF69">
    <property type="entry name" value="GLYCEROL KINASE"/>
    <property type="match status" value="1"/>
</dbReference>
<dbReference type="PANTHER" id="PTHR10196">
    <property type="entry name" value="SUGAR KINASE"/>
    <property type="match status" value="1"/>
</dbReference>
<dbReference type="Pfam" id="PF02782">
    <property type="entry name" value="FGGY_C"/>
    <property type="match status" value="1"/>
</dbReference>
<dbReference type="Pfam" id="PF00370">
    <property type="entry name" value="FGGY_N"/>
    <property type="match status" value="1"/>
</dbReference>
<dbReference type="PIRSF" id="PIRSF000538">
    <property type="entry name" value="GlpK"/>
    <property type="match status" value="1"/>
</dbReference>
<dbReference type="SUPFAM" id="SSF53067">
    <property type="entry name" value="Actin-like ATPase domain"/>
    <property type="match status" value="2"/>
</dbReference>
<dbReference type="PROSITE" id="PS00933">
    <property type="entry name" value="FGGY_KINASES_1"/>
    <property type="match status" value="1"/>
</dbReference>
<dbReference type="PROSITE" id="PS00445">
    <property type="entry name" value="FGGY_KINASES_2"/>
    <property type="match status" value="1"/>
</dbReference>
<sequence length="499" mass="55229">MEKKYVLAIDQGTTSSRAMLFDRQGKVAGVAQREFGQIFPQPGWVEHNPREIMTSVYTTITELLNNAQIDAREISGIGITNQRETAVVWDKATGQPIYNAIVWQSRQTKDICTQLKEAGHEQMVRDKTGLLIDAYFSGTKVKWILDHVDGARERARKGELAFGTIDSWLIWNLTGGKVHVTDYTNASRTMMYNIHTLEWDAELLEMLDVPAQMLPEVRSSSEVYGMTQTQYFYGEQVPIAGIAGDQQAALFGQACFEPGIAKNTYGTGCFMLMNTGDKAVASKAGLLTTIAWGIDGKVEYALEGAIFVAGSVVQWLRDGLRMFGKASDSQAYAERAGDNDGVYFVPAFVGLGAPYWRSDIRGAVFGLTRGTSKEHFVRAAVESMAYQTRDVLTAMQSDSGIELKELRADGGAIANDFMAQFQSDILNVPVLRPEVAETTALGAAYLAGLATGFWSSREEIAKQWAVDRRFEPNMPEERREQLYAGWQQAVEATMGFRIS</sequence>
<accession>Q4UZR8</accession>
<keyword id="KW-0067">ATP-binding</keyword>
<keyword id="KW-0319">Glycerol metabolism</keyword>
<keyword id="KW-0418">Kinase</keyword>
<keyword id="KW-0547">Nucleotide-binding</keyword>
<keyword id="KW-0808">Transferase</keyword>